<name>RL31_RHOCS</name>
<evidence type="ECO:0000255" key="1">
    <source>
        <dbReference type="HAMAP-Rule" id="MF_00501"/>
    </source>
</evidence>
<evidence type="ECO:0000305" key="2"/>
<reference key="1">
    <citation type="submission" date="2007-03" db="EMBL/GenBank/DDBJ databases">
        <title>Genome sequence of Rhodospirillum centenum.</title>
        <authorList>
            <person name="Touchman J.W."/>
            <person name="Bauer C."/>
            <person name="Blankenship R.E."/>
        </authorList>
    </citation>
    <scope>NUCLEOTIDE SEQUENCE [LARGE SCALE GENOMIC DNA]</scope>
    <source>
        <strain>ATCC 51521 / SW</strain>
    </source>
</reference>
<accession>B6INQ0</accession>
<protein>
    <recommendedName>
        <fullName evidence="1">Large ribosomal subunit protein bL31</fullName>
    </recommendedName>
    <alternativeName>
        <fullName evidence="2">50S ribosomal protein L31</fullName>
    </alternativeName>
</protein>
<organism>
    <name type="scientific">Rhodospirillum centenum (strain ATCC 51521 / SW)</name>
    <dbReference type="NCBI Taxonomy" id="414684"/>
    <lineage>
        <taxon>Bacteria</taxon>
        <taxon>Pseudomonadati</taxon>
        <taxon>Pseudomonadota</taxon>
        <taxon>Alphaproteobacteria</taxon>
        <taxon>Rhodospirillales</taxon>
        <taxon>Rhodospirillaceae</taxon>
        <taxon>Rhodospirillum</taxon>
    </lineage>
</organism>
<dbReference type="EMBL" id="CP000613">
    <property type="protein sequence ID" value="ACI99234.1"/>
    <property type="molecule type" value="Genomic_DNA"/>
</dbReference>
<dbReference type="RefSeq" id="WP_012567019.1">
    <property type="nucleotide sequence ID" value="NC_011420.2"/>
</dbReference>
<dbReference type="SMR" id="B6INQ0"/>
<dbReference type="STRING" id="414684.RC1_1838"/>
<dbReference type="KEGG" id="rce:RC1_1838"/>
<dbReference type="eggNOG" id="COG0254">
    <property type="taxonomic scope" value="Bacteria"/>
</dbReference>
<dbReference type="HOGENOM" id="CLU_114306_3_2_5"/>
<dbReference type="OrthoDB" id="9803251at2"/>
<dbReference type="Proteomes" id="UP000001591">
    <property type="component" value="Chromosome"/>
</dbReference>
<dbReference type="GO" id="GO:1990904">
    <property type="term" value="C:ribonucleoprotein complex"/>
    <property type="evidence" value="ECO:0007669"/>
    <property type="project" value="UniProtKB-KW"/>
</dbReference>
<dbReference type="GO" id="GO:0005840">
    <property type="term" value="C:ribosome"/>
    <property type="evidence" value="ECO:0007669"/>
    <property type="project" value="UniProtKB-KW"/>
</dbReference>
<dbReference type="GO" id="GO:0019843">
    <property type="term" value="F:rRNA binding"/>
    <property type="evidence" value="ECO:0007669"/>
    <property type="project" value="UniProtKB-KW"/>
</dbReference>
<dbReference type="GO" id="GO:0003735">
    <property type="term" value="F:structural constituent of ribosome"/>
    <property type="evidence" value="ECO:0007669"/>
    <property type="project" value="InterPro"/>
</dbReference>
<dbReference type="GO" id="GO:0006412">
    <property type="term" value="P:translation"/>
    <property type="evidence" value="ECO:0007669"/>
    <property type="project" value="UniProtKB-UniRule"/>
</dbReference>
<dbReference type="Gene3D" id="4.10.830.30">
    <property type="entry name" value="Ribosomal protein L31"/>
    <property type="match status" value="1"/>
</dbReference>
<dbReference type="HAMAP" id="MF_00501">
    <property type="entry name" value="Ribosomal_bL31_1"/>
    <property type="match status" value="1"/>
</dbReference>
<dbReference type="InterPro" id="IPR034704">
    <property type="entry name" value="Ribosomal_bL28/bL31-like_sf"/>
</dbReference>
<dbReference type="InterPro" id="IPR002150">
    <property type="entry name" value="Ribosomal_bL31"/>
</dbReference>
<dbReference type="InterPro" id="IPR027491">
    <property type="entry name" value="Ribosomal_bL31_A"/>
</dbReference>
<dbReference type="InterPro" id="IPR042105">
    <property type="entry name" value="Ribosomal_bL31_sf"/>
</dbReference>
<dbReference type="NCBIfam" id="TIGR00105">
    <property type="entry name" value="L31"/>
    <property type="match status" value="1"/>
</dbReference>
<dbReference type="NCBIfam" id="NF001809">
    <property type="entry name" value="PRK00528.1"/>
    <property type="match status" value="1"/>
</dbReference>
<dbReference type="PANTHER" id="PTHR33280">
    <property type="entry name" value="50S RIBOSOMAL PROTEIN L31, CHLOROPLASTIC"/>
    <property type="match status" value="1"/>
</dbReference>
<dbReference type="PANTHER" id="PTHR33280:SF6">
    <property type="entry name" value="LARGE RIBOSOMAL SUBUNIT PROTEIN BL31A"/>
    <property type="match status" value="1"/>
</dbReference>
<dbReference type="Pfam" id="PF01197">
    <property type="entry name" value="Ribosomal_L31"/>
    <property type="match status" value="1"/>
</dbReference>
<dbReference type="PRINTS" id="PR01249">
    <property type="entry name" value="RIBOSOMALL31"/>
</dbReference>
<dbReference type="SUPFAM" id="SSF143800">
    <property type="entry name" value="L28p-like"/>
    <property type="match status" value="1"/>
</dbReference>
<dbReference type="PROSITE" id="PS01143">
    <property type="entry name" value="RIBOSOMAL_L31"/>
    <property type="match status" value="1"/>
</dbReference>
<gene>
    <name evidence="1" type="primary">rpmE</name>
    <name type="ordered locus">RC1_1838</name>
</gene>
<sequence>MKPEIHPEYHEITVVMTDGSSFKTRTTWGKPGDTMRLDIDPKSHPAWTGVQKLVDTGGQIAKFNKRFSNFGLK</sequence>
<feature type="chain" id="PRO_1000126707" description="Large ribosomal subunit protein bL31">
    <location>
        <begin position="1"/>
        <end position="73"/>
    </location>
</feature>
<comment type="function">
    <text evidence="1">Binds the 23S rRNA.</text>
</comment>
<comment type="subunit">
    <text evidence="1">Part of the 50S ribosomal subunit.</text>
</comment>
<comment type="similarity">
    <text evidence="1">Belongs to the bacterial ribosomal protein bL31 family. Type A subfamily.</text>
</comment>
<keyword id="KW-1185">Reference proteome</keyword>
<keyword id="KW-0687">Ribonucleoprotein</keyword>
<keyword id="KW-0689">Ribosomal protein</keyword>
<keyword id="KW-0694">RNA-binding</keyword>
<keyword id="KW-0699">rRNA-binding</keyword>
<proteinExistence type="inferred from homology"/>